<accession>Q03CY0</accession>
<protein>
    <recommendedName>
        <fullName evidence="1">Anthranilate phosphoribosyltransferase</fullName>
        <ecNumber evidence="1">2.4.2.18</ecNumber>
    </recommendedName>
</protein>
<reference key="1">
    <citation type="journal article" date="2006" name="Proc. Natl. Acad. Sci. U.S.A.">
        <title>Comparative genomics of the lactic acid bacteria.</title>
        <authorList>
            <person name="Makarova K.S."/>
            <person name="Slesarev A."/>
            <person name="Wolf Y.I."/>
            <person name="Sorokin A."/>
            <person name="Mirkin B."/>
            <person name="Koonin E.V."/>
            <person name="Pavlov A."/>
            <person name="Pavlova N."/>
            <person name="Karamychev V."/>
            <person name="Polouchine N."/>
            <person name="Shakhova V."/>
            <person name="Grigoriev I."/>
            <person name="Lou Y."/>
            <person name="Rohksar D."/>
            <person name="Lucas S."/>
            <person name="Huang K."/>
            <person name="Goodstein D.M."/>
            <person name="Hawkins T."/>
            <person name="Plengvidhya V."/>
            <person name="Welker D."/>
            <person name="Hughes J."/>
            <person name="Goh Y."/>
            <person name="Benson A."/>
            <person name="Baldwin K."/>
            <person name="Lee J.-H."/>
            <person name="Diaz-Muniz I."/>
            <person name="Dosti B."/>
            <person name="Smeianov V."/>
            <person name="Wechter W."/>
            <person name="Barabote R."/>
            <person name="Lorca G."/>
            <person name="Altermann E."/>
            <person name="Barrangou R."/>
            <person name="Ganesan B."/>
            <person name="Xie Y."/>
            <person name="Rawsthorne H."/>
            <person name="Tamir D."/>
            <person name="Parker C."/>
            <person name="Breidt F."/>
            <person name="Broadbent J.R."/>
            <person name="Hutkins R."/>
            <person name="O'Sullivan D."/>
            <person name="Steele J."/>
            <person name="Unlu G."/>
            <person name="Saier M.H. Jr."/>
            <person name="Klaenhammer T."/>
            <person name="Richardson P."/>
            <person name="Kozyavkin S."/>
            <person name="Weimer B.C."/>
            <person name="Mills D.A."/>
        </authorList>
    </citation>
    <scope>NUCLEOTIDE SEQUENCE [LARGE SCALE GENOMIC DNA]</scope>
    <source>
        <strain>ATCC 334 / BCRC 17002 / CCUG 31169 / CIP 107868 / KCTC 3260 / NRRL B-441</strain>
    </source>
</reference>
<proteinExistence type="inferred from homology"/>
<dbReference type="EC" id="2.4.2.18" evidence="1"/>
<dbReference type="EMBL" id="CP000423">
    <property type="protein sequence ID" value="ABJ68942.1"/>
    <property type="molecule type" value="Genomic_DNA"/>
</dbReference>
<dbReference type="RefSeq" id="WP_011673966.1">
    <property type="nucleotide sequence ID" value="NC_008526.1"/>
</dbReference>
<dbReference type="RefSeq" id="YP_805384.1">
    <property type="nucleotide sequence ID" value="NC_008526.1"/>
</dbReference>
<dbReference type="SMR" id="Q03CY0"/>
<dbReference type="STRING" id="321967.LSEI_0078"/>
<dbReference type="PaxDb" id="321967-LSEI_0078"/>
<dbReference type="KEGG" id="lca:LSEI_0078"/>
<dbReference type="PATRIC" id="fig|321967.11.peg.103"/>
<dbReference type="HOGENOM" id="CLU_034315_2_1_9"/>
<dbReference type="UniPathway" id="UPA00035">
    <property type="reaction ID" value="UER00041"/>
</dbReference>
<dbReference type="Proteomes" id="UP000001651">
    <property type="component" value="Chromosome"/>
</dbReference>
<dbReference type="GO" id="GO:0005829">
    <property type="term" value="C:cytosol"/>
    <property type="evidence" value="ECO:0007669"/>
    <property type="project" value="TreeGrafter"/>
</dbReference>
<dbReference type="GO" id="GO:0004048">
    <property type="term" value="F:anthranilate phosphoribosyltransferase activity"/>
    <property type="evidence" value="ECO:0007669"/>
    <property type="project" value="UniProtKB-UniRule"/>
</dbReference>
<dbReference type="GO" id="GO:0000287">
    <property type="term" value="F:magnesium ion binding"/>
    <property type="evidence" value="ECO:0007669"/>
    <property type="project" value="UniProtKB-UniRule"/>
</dbReference>
<dbReference type="GO" id="GO:0000162">
    <property type="term" value="P:L-tryptophan biosynthetic process"/>
    <property type="evidence" value="ECO:0007669"/>
    <property type="project" value="UniProtKB-UniRule"/>
</dbReference>
<dbReference type="FunFam" id="3.40.1030.10:FF:000002">
    <property type="entry name" value="Anthranilate phosphoribosyltransferase"/>
    <property type="match status" value="1"/>
</dbReference>
<dbReference type="Gene3D" id="3.40.1030.10">
    <property type="entry name" value="Nucleoside phosphorylase/phosphoribosyltransferase catalytic domain"/>
    <property type="match status" value="1"/>
</dbReference>
<dbReference type="Gene3D" id="1.20.970.10">
    <property type="entry name" value="Transferase, Pyrimidine Nucleoside Phosphorylase, Chain C"/>
    <property type="match status" value="1"/>
</dbReference>
<dbReference type="HAMAP" id="MF_00211">
    <property type="entry name" value="TrpD"/>
    <property type="match status" value="1"/>
</dbReference>
<dbReference type="InterPro" id="IPR005940">
    <property type="entry name" value="Anthranilate_Pribosyl_Tfrase"/>
</dbReference>
<dbReference type="InterPro" id="IPR000312">
    <property type="entry name" value="Glycosyl_Trfase_fam3"/>
</dbReference>
<dbReference type="InterPro" id="IPR017459">
    <property type="entry name" value="Glycosyl_Trfase_fam3_N_dom"/>
</dbReference>
<dbReference type="InterPro" id="IPR036320">
    <property type="entry name" value="Glycosyl_Trfase_fam3_N_dom_sf"/>
</dbReference>
<dbReference type="InterPro" id="IPR035902">
    <property type="entry name" value="Nuc_phospho_transferase"/>
</dbReference>
<dbReference type="NCBIfam" id="TIGR01245">
    <property type="entry name" value="trpD"/>
    <property type="match status" value="1"/>
</dbReference>
<dbReference type="PANTHER" id="PTHR43285">
    <property type="entry name" value="ANTHRANILATE PHOSPHORIBOSYLTRANSFERASE"/>
    <property type="match status" value="1"/>
</dbReference>
<dbReference type="PANTHER" id="PTHR43285:SF2">
    <property type="entry name" value="ANTHRANILATE PHOSPHORIBOSYLTRANSFERASE"/>
    <property type="match status" value="1"/>
</dbReference>
<dbReference type="Pfam" id="PF02885">
    <property type="entry name" value="Glycos_trans_3N"/>
    <property type="match status" value="1"/>
</dbReference>
<dbReference type="Pfam" id="PF00591">
    <property type="entry name" value="Glycos_transf_3"/>
    <property type="match status" value="1"/>
</dbReference>
<dbReference type="SUPFAM" id="SSF52418">
    <property type="entry name" value="Nucleoside phosphorylase/phosphoribosyltransferase catalytic domain"/>
    <property type="match status" value="1"/>
</dbReference>
<dbReference type="SUPFAM" id="SSF47648">
    <property type="entry name" value="Nucleoside phosphorylase/phosphoribosyltransferase N-terminal domain"/>
    <property type="match status" value="1"/>
</dbReference>
<gene>
    <name evidence="1" type="primary">trpD</name>
    <name type="ordered locus">LSEI_0078</name>
</gene>
<name>TRPD_LACP3</name>
<evidence type="ECO:0000255" key="1">
    <source>
        <dbReference type="HAMAP-Rule" id="MF_00211"/>
    </source>
</evidence>
<organism>
    <name type="scientific">Lacticaseibacillus paracasei (strain ATCC 334 / BCRC 17002 / CCUG 31169 / CIP 107868 / KCTC 3260 / NRRL B-441)</name>
    <name type="common">Lactobacillus paracasei</name>
    <dbReference type="NCBI Taxonomy" id="321967"/>
    <lineage>
        <taxon>Bacteria</taxon>
        <taxon>Bacillati</taxon>
        <taxon>Bacillota</taxon>
        <taxon>Bacilli</taxon>
        <taxon>Lactobacillales</taxon>
        <taxon>Lactobacillaceae</taxon>
        <taxon>Lacticaseibacillus</taxon>
    </lineage>
</organism>
<sequence length="341" mass="36515">MIKQAIEKVVNHENLTFEESEAVLDEIMNGEASEVQTASLLTALTAKNPTIDEIAGAAASMRSHALAFPETKDVLEIVGTGGDHANTFNISTTSAIVVAATGTQVAKHGNRAASSKSGAADVLEALGLDINETPAVSYESLQENNLAFLFAQEYHKSMKYVATVRKQLGFRTIFNILGPLANPAHPTHQLLGVYDETLLEPLANVLKKLGVTNAMVVHGRDGLDEMTTADETAVVELQDDHLTKYTVTPEQFGLKRRQRADLVGGTPEANADITRRILAGDHGPQRDIVLLNAGAALHVAHPALSIQAGIDLAAKTIDDGKAFEELNRLLAFSDKRKDVVA</sequence>
<comment type="function">
    <text evidence="1">Catalyzes the transfer of the phosphoribosyl group of 5-phosphorylribose-1-pyrophosphate (PRPP) to anthranilate to yield N-(5'-phosphoribosyl)-anthranilate (PRA).</text>
</comment>
<comment type="catalytic activity">
    <reaction evidence="1">
        <text>N-(5-phospho-beta-D-ribosyl)anthranilate + diphosphate = 5-phospho-alpha-D-ribose 1-diphosphate + anthranilate</text>
        <dbReference type="Rhea" id="RHEA:11768"/>
        <dbReference type="ChEBI" id="CHEBI:16567"/>
        <dbReference type="ChEBI" id="CHEBI:18277"/>
        <dbReference type="ChEBI" id="CHEBI:33019"/>
        <dbReference type="ChEBI" id="CHEBI:58017"/>
        <dbReference type="EC" id="2.4.2.18"/>
    </reaction>
</comment>
<comment type="cofactor">
    <cofactor evidence="1">
        <name>Mg(2+)</name>
        <dbReference type="ChEBI" id="CHEBI:18420"/>
    </cofactor>
    <text evidence="1">Binds 2 magnesium ions per monomer.</text>
</comment>
<comment type="pathway">
    <text evidence="1">Amino-acid biosynthesis; L-tryptophan biosynthesis; L-tryptophan from chorismate: step 2/5.</text>
</comment>
<comment type="subunit">
    <text evidence="1">Homodimer.</text>
</comment>
<comment type="similarity">
    <text evidence="1">Belongs to the anthranilate phosphoribosyltransferase family.</text>
</comment>
<keyword id="KW-0028">Amino-acid biosynthesis</keyword>
<keyword id="KW-0057">Aromatic amino acid biosynthesis</keyword>
<keyword id="KW-0328">Glycosyltransferase</keyword>
<keyword id="KW-0460">Magnesium</keyword>
<keyword id="KW-0479">Metal-binding</keyword>
<keyword id="KW-1185">Reference proteome</keyword>
<keyword id="KW-0808">Transferase</keyword>
<keyword id="KW-0822">Tryptophan biosynthesis</keyword>
<feature type="chain" id="PRO_1000043018" description="Anthranilate phosphoribosyltransferase">
    <location>
        <begin position="1"/>
        <end position="341"/>
    </location>
</feature>
<feature type="binding site" evidence="1">
    <location>
        <position position="79"/>
    </location>
    <ligand>
        <name>5-phospho-alpha-D-ribose 1-diphosphate</name>
        <dbReference type="ChEBI" id="CHEBI:58017"/>
    </ligand>
</feature>
<feature type="binding site" evidence="1">
    <location>
        <position position="79"/>
    </location>
    <ligand>
        <name>anthranilate</name>
        <dbReference type="ChEBI" id="CHEBI:16567"/>
        <label>1</label>
    </ligand>
</feature>
<feature type="binding site" evidence="1">
    <location>
        <begin position="82"/>
        <end position="83"/>
    </location>
    <ligand>
        <name>5-phospho-alpha-D-ribose 1-diphosphate</name>
        <dbReference type="ChEBI" id="CHEBI:58017"/>
    </ligand>
</feature>
<feature type="binding site" evidence="1">
    <location>
        <position position="87"/>
    </location>
    <ligand>
        <name>5-phospho-alpha-D-ribose 1-diphosphate</name>
        <dbReference type="ChEBI" id="CHEBI:58017"/>
    </ligand>
</feature>
<feature type="binding site" evidence="1">
    <location>
        <begin position="89"/>
        <end position="92"/>
    </location>
    <ligand>
        <name>5-phospho-alpha-D-ribose 1-diphosphate</name>
        <dbReference type="ChEBI" id="CHEBI:58017"/>
    </ligand>
</feature>
<feature type="binding site" evidence="1">
    <location>
        <position position="91"/>
    </location>
    <ligand>
        <name>Mg(2+)</name>
        <dbReference type="ChEBI" id="CHEBI:18420"/>
        <label>1</label>
    </ligand>
</feature>
<feature type="binding site" evidence="1">
    <location>
        <begin position="107"/>
        <end position="115"/>
    </location>
    <ligand>
        <name>5-phospho-alpha-D-ribose 1-diphosphate</name>
        <dbReference type="ChEBI" id="CHEBI:58017"/>
    </ligand>
</feature>
<feature type="binding site" evidence="1">
    <location>
        <position position="110"/>
    </location>
    <ligand>
        <name>anthranilate</name>
        <dbReference type="ChEBI" id="CHEBI:16567"/>
        <label>1</label>
    </ligand>
</feature>
<feature type="binding site" evidence="1">
    <location>
        <position position="119"/>
    </location>
    <ligand>
        <name>5-phospho-alpha-D-ribose 1-diphosphate</name>
        <dbReference type="ChEBI" id="CHEBI:58017"/>
    </ligand>
</feature>
<feature type="binding site" evidence="1">
    <location>
        <position position="165"/>
    </location>
    <ligand>
        <name>anthranilate</name>
        <dbReference type="ChEBI" id="CHEBI:16567"/>
        <label>2</label>
    </ligand>
</feature>
<feature type="binding site" evidence="1">
    <location>
        <position position="224"/>
    </location>
    <ligand>
        <name>Mg(2+)</name>
        <dbReference type="ChEBI" id="CHEBI:18420"/>
        <label>2</label>
    </ligand>
</feature>
<feature type="binding site" evidence="1">
    <location>
        <position position="225"/>
    </location>
    <ligand>
        <name>Mg(2+)</name>
        <dbReference type="ChEBI" id="CHEBI:18420"/>
        <label>1</label>
    </ligand>
</feature>
<feature type="binding site" evidence="1">
    <location>
        <position position="225"/>
    </location>
    <ligand>
        <name>Mg(2+)</name>
        <dbReference type="ChEBI" id="CHEBI:18420"/>
        <label>2</label>
    </ligand>
</feature>